<feature type="chain" id="PRO_0000232951" description="Peptidyl-prolyl cis-trans isomerase D">
    <location>
        <begin position="1"/>
        <end position="398"/>
    </location>
</feature>
<feature type="domain" description="PPIase cyclophilin-type" evidence="2">
    <location>
        <begin position="21"/>
        <end position="185"/>
    </location>
</feature>
<feature type="repeat" description="TPR 1">
    <location>
        <begin position="229"/>
        <end position="262"/>
    </location>
</feature>
<feature type="repeat" description="TPR 2">
    <location>
        <begin position="282"/>
        <end position="323"/>
    </location>
</feature>
<feature type="repeat" description="TPR 3">
    <location>
        <begin position="335"/>
        <end position="368"/>
    </location>
</feature>
<accession>Q4P0V4</accession>
<accession>A0A0D1CFS2</accession>
<protein>
    <recommendedName>
        <fullName>Peptidyl-prolyl cis-trans isomerase D</fullName>
        <shortName>PPIase D</shortName>
        <ecNumber>5.2.1.8</ecNumber>
    </recommendedName>
    <alternativeName>
        <fullName>Rotamase D</fullName>
    </alternativeName>
</protein>
<gene>
    <name type="primary">CPR6</name>
    <name type="ORF">UMAG_06259</name>
</gene>
<name>PPID_MYCMD</name>
<organism>
    <name type="scientific">Mycosarcoma maydis</name>
    <name type="common">Corn smut fungus</name>
    <name type="synonym">Ustilago maydis</name>
    <dbReference type="NCBI Taxonomy" id="5270"/>
    <lineage>
        <taxon>Eukaryota</taxon>
        <taxon>Fungi</taxon>
        <taxon>Dikarya</taxon>
        <taxon>Basidiomycota</taxon>
        <taxon>Ustilaginomycotina</taxon>
        <taxon>Ustilaginomycetes</taxon>
        <taxon>Ustilaginales</taxon>
        <taxon>Ustilaginaceae</taxon>
        <taxon>Mycosarcoma</taxon>
    </lineage>
</organism>
<dbReference type="EC" id="5.2.1.8"/>
<dbReference type="EMBL" id="CM003161">
    <property type="protein sequence ID" value="KIS65883.1"/>
    <property type="molecule type" value="Genomic_DNA"/>
</dbReference>
<dbReference type="RefSeq" id="XP_011392601.1">
    <property type="nucleotide sequence ID" value="XM_011394299.1"/>
</dbReference>
<dbReference type="SMR" id="Q4P0V4"/>
<dbReference type="FunCoup" id="Q4P0V4">
    <property type="interactions" value="544"/>
</dbReference>
<dbReference type="STRING" id="237631.Q4P0V4"/>
<dbReference type="EnsemblFungi" id="KIS65883">
    <property type="protein sequence ID" value="KIS65883"/>
    <property type="gene ID" value="UMAG_06259"/>
</dbReference>
<dbReference type="GeneID" id="23565907"/>
<dbReference type="KEGG" id="uma:UMAG_06259"/>
<dbReference type="VEuPathDB" id="FungiDB:UMAG_06259"/>
<dbReference type="eggNOG" id="KOG0546">
    <property type="taxonomic scope" value="Eukaryota"/>
</dbReference>
<dbReference type="HOGENOM" id="CLU_012062_37_0_1"/>
<dbReference type="InParanoid" id="Q4P0V4"/>
<dbReference type="OMA" id="EMEQNCN"/>
<dbReference type="OrthoDB" id="193499at2759"/>
<dbReference type="Proteomes" id="UP000000561">
    <property type="component" value="Chromosome 22"/>
</dbReference>
<dbReference type="GO" id="GO:0005737">
    <property type="term" value="C:cytoplasm"/>
    <property type="evidence" value="ECO:0000318"/>
    <property type="project" value="GO_Central"/>
</dbReference>
<dbReference type="GO" id="GO:0043231">
    <property type="term" value="C:intracellular membrane-bounded organelle"/>
    <property type="evidence" value="ECO:0000318"/>
    <property type="project" value="GO_Central"/>
</dbReference>
<dbReference type="GO" id="GO:0016018">
    <property type="term" value="F:cyclosporin A binding"/>
    <property type="evidence" value="ECO:0000318"/>
    <property type="project" value="GO_Central"/>
</dbReference>
<dbReference type="GO" id="GO:0003755">
    <property type="term" value="F:peptidyl-prolyl cis-trans isomerase activity"/>
    <property type="evidence" value="ECO:0000318"/>
    <property type="project" value="GO_Central"/>
</dbReference>
<dbReference type="GO" id="GO:0006457">
    <property type="term" value="P:protein folding"/>
    <property type="evidence" value="ECO:0000318"/>
    <property type="project" value="GO_Central"/>
</dbReference>
<dbReference type="FunFam" id="2.40.100.10:FF:000025">
    <property type="entry name" value="Peptidyl-prolyl cis-trans isomerase CYP19-2"/>
    <property type="match status" value="1"/>
</dbReference>
<dbReference type="FunFam" id="1.25.40.10:FF:000029">
    <property type="entry name" value="peptidyl-prolyl cis-trans isomerase D"/>
    <property type="match status" value="1"/>
</dbReference>
<dbReference type="Gene3D" id="2.40.100.10">
    <property type="entry name" value="Cyclophilin-like"/>
    <property type="match status" value="1"/>
</dbReference>
<dbReference type="Gene3D" id="1.25.40.10">
    <property type="entry name" value="Tetratricopeptide repeat domain"/>
    <property type="match status" value="1"/>
</dbReference>
<dbReference type="InterPro" id="IPR029000">
    <property type="entry name" value="Cyclophilin-like_dom_sf"/>
</dbReference>
<dbReference type="InterPro" id="IPR020892">
    <property type="entry name" value="Cyclophilin-type_PPIase_CS"/>
</dbReference>
<dbReference type="InterPro" id="IPR002130">
    <property type="entry name" value="Cyclophilin-type_PPIase_dom"/>
</dbReference>
<dbReference type="InterPro" id="IPR011990">
    <property type="entry name" value="TPR-like_helical_dom_sf"/>
</dbReference>
<dbReference type="InterPro" id="IPR019734">
    <property type="entry name" value="TPR_rpt"/>
</dbReference>
<dbReference type="PANTHER" id="PTHR11071">
    <property type="entry name" value="PEPTIDYL-PROLYL CIS-TRANS ISOMERASE"/>
    <property type="match status" value="1"/>
</dbReference>
<dbReference type="PANTHER" id="PTHR11071:SF561">
    <property type="entry name" value="PEPTIDYL-PROLYL CIS-TRANS ISOMERASE D-RELATED"/>
    <property type="match status" value="1"/>
</dbReference>
<dbReference type="Pfam" id="PF00160">
    <property type="entry name" value="Pro_isomerase"/>
    <property type="match status" value="1"/>
</dbReference>
<dbReference type="PRINTS" id="PR00153">
    <property type="entry name" value="CSAPPISMRASE"/>
</dbReference>
<dbReference type="SMART" id="SM00028">
    <property type="entry name" value="TPR"/>
    <property type="match status" value="2"/>
</dbReference>
<dbReference type="SUPFAM" id="SSF50891">
    <property type="entry name" value="Cyclophilin-like"/>
    <property type="match status" value="1"/>
</dbReference>
<dbReference type="SUPFAM" id="SSF48452">
    <property type="entry name" value="TPR-like"/>
    <property type="match status" value="1"/>
</dbReference>
<dbReference type="PROSITE" id="PS00170">
    <property type="entry name" value="CSA_PPIASE_1"/>
    <property type="match status" value="1"/>
</dbReference>
<dbReference type="PROSITE" id="PS50072">
    <property type="entry name" value="CSA_PPIASE_2"/>
    <property type="match status" value="1"/>
</dbReference>
<dbReference type="PROSITE" id="PS50005">
    <property type="entry name" value="TPR"/>
    <property type="match status" value="2"/>
</dbReference>
<dbReference type="PROSITE" id="PS50293">
    <property type="entry name" value="TPR_REGION"/>
    <property type="match status" value="2"/>
</dbReference>
<reference key="1">
    <citation type="journal article" date="2006" name="Nature">
        <title>Insights from the genome of the biotrophic fungal plant pathogen Ustilago maydis.</title>
        <authorList>
            <person name="Kaemper J."/>
            <person name="Kahmann R."/>
            <person name="Boelker M."/>
            <person name="Ma L.-J."/>
            <person name="Brefort T."/>
            <person name="Saville B.J."/>
            <person name="Banuett F."/>
            <person name="Kronstad J.W."/>
            <person name="Gold S.E."/>
            <person name="Mueller O."/>
            <person name="Perlin M.H."/>
            <person name="Woesten H.A.B."/>
            <person name="de Vries R."/>
            <person name="Ruiz-Herrera J."/>
            <person name="Reynaga-Pena C.G."/>
            <person name="Snetselaar K."/>
            <person name="McCann M."/>
            <person name="Perez-Martin J."/>
            <person name="Feldbruegge M."/>
            <person name="Basse C.W."/>
            <person name="Steinberg G."/>
            <person name="Ibeas J.I."/>
            <person name="Holloman W."/>
            <person name="Guzman P."/>
            <person name="Farman M.L."/>
            <person name="Stajich J.E."/>
            <person name="Sentandreu R."/>
            <person name="Gonzalez-Prieto J.M."/>
            <person name="Kennell J.C."/>
            <person name="Molina L."/>
            <person name="Schirawski J."/>
            <person name="Mendoza-Mendoza A."/>
            <person name="Greilinger D."/>
            <person name="Muench K."/>
            <person name="Roessel N."/>
            <person name="Scherer M."/>
            <person name="Vranes M."/>
            <person name="Ladendorf O."/>
            <person name="Vincon V."/>
            <person name="Fuchs U."/>
            <person name="Sandrock B."/>
            <person name="Meng S."/>
            <person name="Ho E.C.H."/>
            <person name="Cahill M.J."/>
            <person name="Boyce K.J."/>
            <person name="Klose J."/>
            <person name="Klosterman S.J."/>
            <person name="Deelstra H.J."/>
            <person name="Ortiz-Castellanos L."/>
            <person name="Li W."/>
            <person name="Sanchez-Alonso P."/>
            <person name="Schreier P.H."/>
            <person name="Haeuser-Hahn I."/>
            <person name="Vaupel M."/>
            <person name="Koopmann E."/>
            <person name="Friedrich G."/>
            <person name="Voss H."/>
            <person name="Schlueter T."/>
            <person name="Margolis J."/>
            <person name="Platt D."/>
            <person name="Swimmer C."/>
            <person name="Gnirke A."/>
            <person name="Chen F."/>
            <person name="Vysotskaia V."/>
            <person name="Mannhaupt G."/>
            <person name="Gueldener U."/>
            <person name="Muensterkoetter M."/>
            <person name="Haase D."/>
            <person name="Oesterheld M."/>
            <person name="Mewes H.-W."/>
            <person name="Mauceli E.W."/>
            <person name="DeCaprio D."/>
            <person name="Wade C.M."/>
            <person name="Butler J."/>
            <person name="Young S.K."/>
            <person name="Jaffe D.B."/>
            <person name="Calvo S.E."/>
            <person name="Nusbaum C."/>
            <person name="Galagan J.E."/>
            <person name="Birren B.W."/>
        </authorList>
    </citation>
    <scope>NUCLEOTIDE SEQUENCE [LARGE SCALE GENOMIC DNA]</scope>
    <source>
        <strain>DSM 14603 / FGSC 9021 / UM521</strain>
    </source>
</reference>
<reference key="2">
    <citation type="submission" date="2014-09" db="EMBL/GenBank/DDBJ databases">
        <authorList>
            <person name="Gueldener U."/>
            <person name="Muensterkoetter M."/>
            <person name="Walter M.C."/>
            <person name="Mannhaupt G."/>
            <person name="Kahmann R."/>
        </authorList>
    </citation>
    <scope>GENOME REANNOTATION</scope>
    <source>
        <strain>DSM 14603 / FGSC 9021 / UM521</strain>
    </source>
</reference>
<keyword id="KW-0963">Cytoplasm</keyword>
<keyword id="KW-0413">Isomerase</keyword>
<keyword id="KW-1185">Reference proteome</keyword>
<keyword id="KW-0677">Repeat</keyword>
<keyword id="KW-0697">Rotamase</keyword>
<keyword id="KW-0802">TPR repeat</keyword>
<sequence>MSSTNTTPKPGNPIVYLDLAFGSSPASRPGSNRIVLELYADRVPRTAENFRVLCTNTSKLASTGQPLSFRNSIFHRVIPKFMIQGGDFTRADGTGGESIYGEKFQDEDLTGKHDVPFLLSMANAGANTNGSQFFITTVPTPHLDGKHVVFGRVLKGKGVVRRVESVETVASDRPKEDVKIVDCGELTGDEVSNQTYGIEQDDTGDQYEDFPEDQDDKLESDVSATYHIGLALKNMANTQFSKANFDIALEKYSKALRYLQLHPILPEDTPADLAANYTTLKTSIQLNACLCALKTTPAQPRVAISNATAVISNLTSNKAPSTEQADKNKYHSDLAKAFYRRASAYVAQKDDERAEADLKHALENAPEDAGVKRELQALARRKEAKLKGMRAAYSKMFS</sequence>
<evidence type="ECO:0000250" key="1"/>
<evidence type="ECO:0000255" key="2">
    <source>
        <dbReference type="PROSITE-ProRule" id="PRU00156"/>
    </source>
</evidence>
<evidence type="ECO:0000305" key="3"/>
<comment type="function">
    <text evidence="1">PPIases accelerate the folding of proteins. It catalyzes the cis-trans isomerization of proline imidic peptide bonds in oligopeptides (By similarity).</text>
</comment>
<comment type="catalytic activity">
    <reaction>
        <text>[protein]-peptidylproline (omega=180) = [protein]-peptidylproline (omega=0)</text>
        <dbReference type="Rhea" id="RHEA:16237"/>
        <dbReference type="Rhea" id="RHEA-COMP:10747"/>
        <dbReference type="Rhea" id="RHEA-COMP:10748"/>
        <dbReference type="ChEBI" id="CHEBI:83833"/>
        <dbReference type="ChEBI" id="CHEBI:83834"/>
        <dbReference type="EC" id="5.2.1.8"/>
    </reaction>
</comment>
<comment type="subcellular location">
    <subcellularLocation>
        <location evidence="1">Cytoplasm</location>
    </subcellularLocation>
</comment>
<comment type="similarity">
    <text evidence="3">Belongs to the cyclophilin-type PPIase family. PPIase D subfamily.</text>
</comment>
<proteinExistence type="inferred from homology"/>